<organism>
    <name type="scientific">Clostridium botulinum (strain Langeland / NCTC 10281 / Type F)</name>
    <dbReference type="NCBI Taxonomy" id="441772"/>
    <lineage>
        <taxon>Bacteria</taxon>
        <taxon>Bacillati</taxon>
        <taxon>Bacillota</taxon>
        <taxon>Clostridia</taxon>
        <taxon>Eubacteriales</taxon>
        <taxon>Clostridiaceae</taxon>
        <taxon>Clostridium</taxon>
    </lineage>
</organism>
<reference key="1">
    <citation type="submission" date="1994-09" db="EMBL/GenBank/DDBJ databases">
        <title>The sequence of the gene encoding type F neurotoxin of clostridium botulinum NCTC 10281; Comparative analysis with other botulinal neurotoxins.</title>
        <authorList>
            <person name="Hutson R.A."/>
            <person name="Collins M.D."/>
        </authorList>
    </citation>
    <scope>NUCLEOTIDE SEQUENCE [GENOMIC DNA]</scope>
    <source>
        <strain>Langeland / NCTC 10281 / Type F</strain>
    </source>
</reference>
<reference key="2">
    <citation type="journal article" date="2010" name="Appl. Environ. Microbiol.">
        <title>Sequence diversity of genes encoding botulinum neurotoxin type F.</title>
        <authorList>
            <person name="Raphael B.H."/>
            <person name="Choudoir M.J."/>
            <person name="Luquez C."/>
            <person name="Fernandez R."/>
            <person name="Maslanka S.E."/>
        </authorList>
    </citation>
    <scope>NUCLEOTIDE SEQUENCE [GENOMIC DNA]</scope>
    <source>
        <strain>Langeland / NCTC 10281 / Type F</strain>
    </source>
</reference>
<reference key="3">
    <citation type="submission" date="2007-06" db="EMBL/GenBank/DDBJ databases">
        <authorList>
            <person name="Brinkac L.M."/>
            <person name="Daugherty S."/>
            <person name="Dodson R.J."/>
            <person name="Madupu R."/>
            <person name="Brown J.L."/>
            <person name="Bruce D."/>
            <person name="Detter C."/>
            <person name="Munk C."/>
            <person name="Smith L.A."/>
            <person name="Smith T.J."/>
            <person name="White O."/>
            <person name="Brettin T.S."/>
        </authorList>
    </citation>
    <scope>NUCLEOTIDE SEQUENCE [LARGE SCALE GENOMIC DNA]</scope>
    <source>
        <strain>Langeland / NCTC 10281 / Type F</strain>
    </source>
</reference>
<reference key="4">
    <citation type="journal article" date="1993" name="J. Clin. Microbiol.">
        <title>Gene probes for identification of the botulinal neurotoxin gene and specific identification of neurotoxin types B, E, and F.</title>
        <authorList>
            <person name="Campbell K.D."/>
            <person name="Collins M.D."/>
            <person name="East A.K."/>
        </authorList>
    </citation>
    <scope>NUCLEOTIDE SEQUENCE [GENOMIC DNA] OF 635-1000</scope>
    <source>
        <strain>Langeland / NCTC 10281 / Type F</strain>
    </source>
</reference>
<reference key="5">
    <citation type="journal article" date="1960" name="Acta Pathol. Microbiol. Scand.">
        <title>Preliminary report on the isolation of an apparently new type of Cl. botulinum.</title>
        <authorList>
            <person name="Moller V."/>
            <person name="Scheibel I."/>
        </authorList>
    </citation>
    <scope>IDENTIFICATION</scope>
    <scope>FUNCTION</scope>
</reference>
<reference key="6">
    <citation type="journal article" date="2009" name="J. Neurochem.">
        <title>Botulinum neurotoxins C, E and F bind gangliosides via a conserved binding site prior to stimulation-dependent uptake with botulinum neurotoxin F utilising the three isoforms of SV2 as second receptor.</title>
        <authorList>
            <person name="Rummel A."/>
            <person name="Haefner K."/>
            <person name="Mahrhold S."/>
            <person name="Darashchonak N."/>
            <person name="Holt M."/>
            <person name="Jahn R."/>
            <person name="Beermann S."/>
            <person name="Karnath T."/>
            <person name="Bigalke H."/>
            <person name="Binz T."/>
        </authorList>
    </citation>
    <scope>FUNCTION (BOTULINUM NEUROTOXIN TYPE F)</scope>
    <scope>FUNCTION (BOTULINUM NEUROTOXIN F HEAVY CHAIN)</scope>
    <scope>INTERACTION WITH HOST SV2 PROTEINS</scope>
    <scope>GANGLIOSIDE-BINDING</scope>
    <scope>MUTAGENESIS OF GLU-1195 AND TRP-1250</scope>
    <source>
        <strain>Langeland / NCTC 10281 / Type F</strain>
    </source>
</reference>
<reference key="7">
    <citation type="journal article" date="2011" name="PLoS Pathog.">
        <title>Botulinum neurotoxin D uses synaptic vesicle protein SV2 and gangliosides as receptors.</title>
        <authorList>
            <person name="Peng L."/>
            <person name="Tepp W.H."/>
            <person name="Johnson E.A."/>
            <person name="Dong M."/>
        </authorList>
    </citation>
    <scope>FUNCTION (BOTULINUM NEUROTOXIN TYPE F)</scope>
    <scope>SV2 NOT RECEPTOR</scope>
    <source>
        <strain>Type F</strain>
    </source>
</reference>
<reference key="8">
    <citation type="journal article" date="2012" name="Microbiol. Immunol.">
        <title>Specificity of botulinum protease for human VAMP family proteins.</title>
        <authorList>
            <person name="Yamamoto H."/>
            <person name="Ida T."/>
            <person name="Tsutsuki H."/>
            <person name="Mori M."/>
            <person name="Matsumoto T."/>
            <person name="Kohda T."/>
            <person name="Mukamoto M."/>
            <person name="Goshima N."/>
            <person name="Kozaki S."/>
            <person name="Ihara H."/>
        </authorList>
    </citation>
    <scope>FUNCTION (BOTULINUM NEUROTOXIN F LIGHT CHAIN)</scope>
    <scope>SUBSTRATE SPECIFICITY</scope>
    <scope>BIOPHYSICOCHEMICAL PROPERTIES</scope>
    <source>
        <strain>Langeland / NCTC 10281 / Type F</strain>
    </source>
</reference>
<reference key="9">
    <citation type="journal article" date="2017" name="Pharmacol. Rev.">
        <title>Botulinum neurotoxins: Biology, pharmacology, and toxicology.</title>
        <authorList>
            <person name="Pirazzini M."/>
            <person name="Rossetto O."/>
            <person name="Eleopra R."/>
            <person name="Montecucco C."/>
        </authorList>
    </citation>
    <scope>REVIEW</scope>
</reference>
<reference evidence="22" key="10">
    <citation type="journal article" date="2009" name="Biochemistry">
        <title>Glycosylated SV2 and gangliosides as dual receptors for botulinum neurotoxin serotype F.</title>
        <authorList>
            <person name="Fu Z."/>
            <person name="Chen C."/>
            <person name="Barbieri J.T."/>
            <person name="Kim J.J."/>
            <person name="Baldwin M.R."/>
        </authorList>
    </citation>
    <scope>X-RAY CRYSTALLOGRAPHY (2.10 ANGSTROMS) OF 862-1278</scope>
    <scope>FUNCTION (BOTULINUM NEUROTOXIN TYPE F)</scope>
    <scope>FUNCTION (BOTULINUM NEUROTOXIN F HEAVY CHAIN)</scope>
    <scope>INTERACTION WITH HOST SV2 AND SYT1</scope>
    <scope>SUBCELLULAR LOCATION (BOTULINUM NEUROTOXIN F LIGHT CHAIN)</scope>
    <scope>DOMAIN</scope>
    <scope>GANGLIOSIDE-BINDING</scope>
    <scope>MUTAGENESIS OF GLU-1195; SER-1248; TRP-1250; TYR-1251 AND ASN-1254</scope>
    <source>
        <strain>Langeland / NCTC 10281 / Type F</strain>
    </source>
</reference>
<reference evidence="20 21" key="11">
    <citation type="journal article" date="2009" name="Nat. Struct. Mol. Biol.">
        <title>Mode of VAMP substrate recognition and inhibition of Clostridium botulinum neurotoxin F.</title>
        <authorList>
            <person name="Agarwal R."/>
            <person name="Schmidt J.J."/>
            <person name="Stafford R.G."/>
            <person name="Swaminathan S."/>
        </authorList>
    </citation>
    <scope>X-RAY CRYSTALLOGRAPHY (2.10 ANGSTROMS) OF 1-419 IN COMPLEX WITH ZINC AND VAMP2 INHIBITORS</scope>
    <scope>FUNCTION (BOTULINUM NEUROTOXIN F LIGHT CHAIN)</scope>
    <scope>SUBSTRATE SPECIFICITY</scope>
    <scope>COFACTOR</scope>
    <scope>MUTAGENESIS OF ARG-133; GLU-164; ARG-171 AND TYR-316</scope>
    <source>
        <strain>Langeland / NCTC 10281 / Type F</strain>
    </source>
</reference>
<reference evidence="23" key="12">
    <citation type="journal article" date="2011" name="J. Biol. Chem.">
        <title>Unique ganglioside recognition strategies for clostridial neurotoxins.</title>
        <authorList>
            <person name="Benson M.A."/>
            <person name="Fu Z."/>
            <person name="Kim J.J."/>
            <person name="Baldwin M.R."/>
        </authorList>
    </citation>
    <scope>X-RAY CRYSTALLOGRAPHY (2.00 ANGSTROMS) OF 866-1278 IN COMPLEX WITH GANGLIOSIDE GD1A</scope>
    <scope>FUNCTION (BOTULINUM NEUROTOXIN F HEAVY CHAIN)</scope>
    <scope>GANGLIOSIDE-BINDING</scope>
    <scope>MUTAGENESIS OF ARG-1111; HIS-1241 AND ARG-1256</scope>
    <source>
        <strain>Langeland / NCTC 10281 / Type F</strain>
    </source>
</reference>
<dbReference type="EC" id="3.4.24.69"/>
<dbReference type="EMBL" id="X81714">
    <property type="protein sequence ID" value="CAA57358.1"/>
    <property type="molecule type" value="Genomic_DNA"/>
</dbReference>
<dbReference type="EMBL" id="GU213203">
    <property type="protein sequence ID" value="ADA79551.1"/>
    <property type="molecule type" value="Genomic_DNA"/>
</dbReference>
<dbReference type="EMBL" id="X70821">
    <property type="protein sequence ID" value="CAA50152.1"/>
    <property type="molecule type" value="Genomic_DNA"/>
</dbReference>
<dbReference type="EMBL" id="CP000728">
    <property type="protein sequence ID" value="ABS41202.1"/>
    <property type="molecule type" value="Genomic_DNA"/>
</dbReference>
<dbReference type="PIR" id="S48110">
    <property type="entry name" value="S48110"/>
</dbReference>
<dbReference type="RefSeq" id="WP_011987710.1">
    <property type="nucleotide sequence ID" value="NC_009699.1"/>
</dbReference>
<dbReference type="PDB" id="3FIE">
    <property type="method" value="X-ray"/>
    <property type="resolution" value="2.10 A"/>
    <property type="chains" value="A/B=1-419"/>
</dbReference>
<dbReference type="PDB" id="3FII">
    <property type="method" value="X-ray"/>
    <property type="resolution" value="2.17 A"/>
    <property type="chains" value="A=1-419"/>
</dbReference>
<dbReference type="PDB" id="3FUQ">
    <property type="method" value="X-ray"/>
    <property type="resolution" value="2.10 A"/>
    <property type="chains" value="A=862-1278"/>
</dbReference>
<dbReference type="PDB" id="3RSJ">
    <property type="method" value="X-ray"/>
    <property type="resolution" value="2.00 A"/>
    <property type="chains" value="A/B/C/D=866-1278"/>
</dbReference>
<dbReference type="PDBsum" id="3FIE"/>
<dbReference type="PDBsum" id="3FII"/>
<dbReference type="PDBsum" id="3FUQ"/>
<dbReference type="PDBsum" id="3RSJ"/>
<dbReference type="SMR" id="A7GBG3"/>
<dbReference type="IntAct" id="A7GBG3">
    <property type="interactions" value="1"/>
</dbReference>
<dbReference type="MINT" id="A7GBG3"/>
<dbReference type="UniLectin" id="A7GBG3"/>
<dbReference type="ABCD" id="A7GBG3">
    <property type="antibodies" value="10 sequenced antibodies"/>
</dbReference>
<dbReference type="KEGG" id="cbf:CLI_0851"/>
<dbReference type="HOGENOM" id="CLU_262205_0_0_9"/>
<dbReference type="BRENDA" id="3.4.24.69">
    <property type="organism ID" value="1462"/>
</dbReference>
<dbReference type="EvolutionaryTrace" id="A7GBG3"/>
<dbReference type="Proteomes" id="UP000002410">
    <property type="component" value="Chromosome"/>
</dbReference>
<dbReference type="GO" id="GO:0005576">
    <property type="term" value="C:extracellular region"/>
    <property type="evidence" value="ECO:0007669"/>
    <property type="project" value="UniProtKB-SubCell"/>
</dbReference>
<dbReference type="GO" id="GO:0044161">
    <property type="term" value="C:host cell cytoplasmic vesicle"/>
    <property type="evidence" value="ECO:0007669"/>
    <property type="project" value="UniProtKB-SubCell"/>
</dbReference>
<dbReference type="GO" id="GO:0044164">
    <property type="term" value="C:host cell cytosol"/>
    <property type="evidence" value="ECO:0007669"/>
    <property type="project" value="UniProtKB-SubCell"/>
</dbReference>
<dbReference type="GO" id="GO:0020002">
    <property type="term" value="C:host cell plasma membrane"/>
    <property type="evidence" value="ECO:0007669"/>
    <property type="project" value="UniProtKB-KW"/>
</dbReference>
<dbReference type="GO" id="GO:0044231">
    <property type="term" value="C:host cell presynaptic membrane"/>
    <property type="evidence" value="ECO:0007669"/>
    <property type="project" value="UniProtKB-SubCell"/>
</dbReference>
<dbReference type="GO" id="GO:0016020">
    <property type="term" value="C:membrane"/>
    <property type="evidence" value="ECO:0007669"/>
    <property type="project" value="UniProtKB-KW"/>
</dbReference>
<dbReference type="GO" id="GO:0008289">
    <property type="term" value="F:lipid binding"/>
    <property type="evidence" value="ECO:0007669"/>
    <property type="project" value="UniProtKB-KW"/>
</dbReference>
<dbReference type="GO" id="GO:0004222">
    <property type="term" value="F:metalloendopeptidase activity"/>
    <property type="evidence" value="ECO:0007669"/>
    <property type="project" value="UniProtKB-EC"/>
</dbReference>
<dbReference type="GO" id="GO:0008320">
    <property type="term" value="F:protein transmembrane transporter activity"/>
    <property type="evidence" value="ECO:0007669"/>
    <property type="project" value="InterPro"/>
</dbReference>
<dbReference type="GO" id="GO:0090729">
    <property type="term" value="F:toxin activity"/>
    <property type="evidence" value="ECO:0007669"/>
    <property type="project" value="UniProtKB-KW"/>
</dbReference>
<dbReference type="GO" id="GO:0008270">
    <property type="term" value="F:zinc ion binding"/>
    <property type="evidence" value="ECO:0007669"/>
    <property type="project" value="InterPro"/>
</dbReference>
<dbReference type="GO" id="GO:0006508">
    <property type="term" value="P:proteolysis"/>
    <property type="evidence" value="ECO:0007669"/>
    <property type="project" value="UniProtKB-KW"/>
</dbReference>
<dbReference type="CDD" id="cd23393">
    <property type="entry name" value="Toxin_R_bind_C_BoNTF"/>
    <property type="match status" value="1"/>
</dbReference>
<dbReference type="FunFam" id="2.60.120.200:FF:000184">
    <property type="entry name" value="Botulinum neurotoxin type A"/>
    <property type="match status" value="1"/>
</dbReference>
<dbReference type="FunFam" id="3.90.1240.10:FF:000001">
    <property type="entry name" value="Botulinum neurotoxin type B"/>
    <property type="match status" value="1"/>
</dbReference>
<dbReference type="Gene3D" id="2.60.120.200">
    <property type="match status" value="1"/>
</dbReference>
<dbReference type="Gene3D" id="2.80.10.50">
    <property type="match status" value="1"/>
</dbReference>
<dbReference type="Gene3D" id="1.20.1120.10">
    <property type="entry name" value="Clostridium botulinum neurotoxin b, 'coiled-coil' domain"/>
    <property type="match status" value="1"/>
</dbReference>
<dbReference type="Gene3D" id="3.90.1240.10">
    <property type="entry name" value="Metalloproteases ('zincins'), catalytic domain like"/>
    <property type="match status" value="1"/>
</dbReference>
<dbReference type="InterPro" id="IPR000395">
    <property type="entry name" value="Bot/tetX_LC"/>
</dbReference>
<dbReference type="InterPro" id="IPR036248">
    <property type="entry name" value="Clostridium_toxin_transloc"/>
</dbReference>
<dbReference type="InterPro" id="IPR013320">
    <property type="entry name" value="ConA-like_dom_sf"/>
</dbReference>
<dbReference type="InterPro" id="IPR011065">
    <property type="entry name" value="Kunitz_inhibitor_STI-like_sf"/>
</dbReference>
<dbReference type="InterPro" id="IPR013104">
    <property type="entry name" value="Toxin_rcpt-bd_C"/>
</dbReference>
<dbReference type="InterPro" id="IPR012928">
    <property type="entry name" value="Toxin_rcpt-bd_N"/>
</dbReference>
<dbReference type="InterPro" id="IPR012500">
    <property type="entry name" value="Toxin_trans"/>
</dbReference>
<dbReference type="Pfam" id="PF01742">
    <property type="entry name" value="Peptidase_M27"/>
    <property type="match status" value="1"/>
</dbReference>
<dbReference type="Pfam" id="PF07951">
    <property type="entry name" value="Toxin_R_bind_C"/>
    <property type="match status" value="1"/>
</dbReference>
<dbReference type="Pfam" id="PF07953">
    <property type="entry name" value="Toxin_R_bind_N"/>
    <property type="match status" value="1"/>
</dbReference>
<dbReference type="Pfam" id="PF07952">
    <property type="entry name" value="Toxin_trans"/>
    <property type="match status" value="1"/>
</dbReference>
<dbReference type="PRINTS" id="PR00760">
    <property type="entry name" value="BONTOXILYSIN"/>
</dbReference>
<dbReference type="SUPFAM" id="SSF58091">
    <property type="entry name" value="Clostridium neurotoxins, 'coiled-coil' domain"/>
    <property type="match status" value="1"/>
</dbReference>
<dbReference type="SUPFAM" id="SSF49899">
    <property type="entry name" value="Concanavalin A-like lectins/glucanases"/>
    <property type="match status" value="1"/>
</dbReference>
<dbReference type="SUPFAM" id="SSF55486">
    <property type="entry name" value="Metalloproteases ('zincins'), catalytic domain"/>
    <property type="match status" value="1"/>
</dbReference>
<dbReference type="SUPFAM" id="SSF50386">
    <property type="entry name" value="STI-like"/>
    <property type="match status" value="1"/>
</dbReference>
<dbReference type="PROSITE" id="PS00142">
    <property type="entry name" value="ZINC_PROTEASE"/>
    <property type="match status" value="1"/>
</dbReference>
<proteinExistence type="evidence at protein level"/>
<protein>
    <recommendedName>
        <fullName>Botulinum neurotoxin type F</fullName>
        <shortName evidence="13">BoNT/F</shortName>
    </recommendedName>
    <alternativeName>
        <fullName>Bontoxilysin-F</fullName>
    </alternativeName>
    <component>
        <recommendedName>
            <fullName>Botulinum neurotoxin F light chain</fullName>
            <shortName>LC</shortName>
            <ecNumber>3.4.24.69</ecNumber>
        </recommendedName>
    </component>
    <component>
        <recommendedName>
            <fullName>Botulinum neurotoxin F heavy chain</fullName>
            <shortName>HC</shortName>
        </recommendedName>
    </component>
</protein>
<gene>
    <name evidence="18" type="primary">F</name>
    <name evidence="19" type="synonym">bont</name>
    <name evidence="18" type="synonym">boNT/F</name>
    <name evidence="18" type="ordered locus">CLI_0851</name>
</gene>
<comment type="function">
    <molecule>Botulinum neurotoxin type F</molecule>
    <text evidence="1 5 6 8 10">Botulinum toxin causes flaccid paralysis by inhibiting neurotransmitter (acetylcholine) release from the presynaptic membranes of nerve terminals of the eukaryotic host skeletal and autonomic nervous system, with frequent heart or respiratory failure (PubMed:14423425). Precursor of botulinum neurotoxin F which may have 2 coreceptors; complex polysialylated gangliosides found on neural tissue and specific membrane-anchored proteins found in synaptic vesicles. Receptor proteins are exposed on host presynaptic cell membrane during neurotransmitter release, when the toxin heavy chain (HC) binds to them (PubMed:19476346, PubMed:19650874). Upon synaptic vesicle recycling the toxin is taken up via the endocytic pathway. When the pH of the toxin-containing endosome drops a structural rearrangement occurs so that the N-terminus of the HC forms pores that allows the light chain (LC) to translocate into the cytosol. Once in the cytosol the disulfide bond linking the 2 subunits is reduced and LC cleaves its target protein on synaptic vesicles, preventing their fusion with the cytoplasmic membrane and thus neurotransmitter release (By similarity). Requires complex gangliosides for full neurotoxicity (PubMed:19650874, PubMed:21483489). Electrical stimulation increases uptake of toxin, presumably by transiently exposing a receptor usually found in eukaryotic target synaptic vesicles (PubMed:19476346, PubMed:19650874). Blocks neurotransmitter release by cleaving synaptobrevin-2/VAMP2 (PubMed:19476346). It is not clear whether a synaptic vesicle protein acts as its receptor; there is evidence for and against SV2 fulfilling this function (PubMed:19476346, PubMed:19650874, PubMed:21483489).</text>
</comment>
<comment type="function">
    <molecule>Botulinum neurotoxin F light chain</molecule>
    <text evidence="2 7 15">Has protease activity (PubMed:19476346, PubMed:19543288). After translocation into the eukaryotic host cytosol, inhibits neurotransmitter release by acting as a zinc endopeptidase that catalyzes the hydrolysis of the '58-Gln-|-Lys-59' bond of synaptobrevin-2/VAMP2 and probably also the equivalent 'Gln-|-Lys' sites in VAMP1 and VAMP3 (PubMed:19476346, PubMed:19543288). Substrate specificity is conferred by multiple interactions of LC with substrate (PubMed:19543288).</text>
</comment>
<comment type="function">
    <molecule>Botulinum neurotoxin F heavy chain</molecule>
    <text evidence="1 6 8 10">Responsible for host epithelial cell transcytosis, host nerve cell targeting and translocation of light chain (LC) into host cytosol. Composed of 3 subdomains; the translocation domain (TD), and N-terminus and C-terminus of the receptor-binding domain (RBD). The RBD is responsible for the adherence of the toxin to the cell surface (PubMed:19476346, PubMed:19650874). The N-terminus of the TD wraps an extended belt around the perimeter of the LC, protecting Zn(2+) in the active site; it may also prevent premature LC dissociation from the translocation channel and protect toxin prior to translocation (By similarity). Isolated HC binds to host synaptosomes and neurons, significantly decreases uptake and toxicity of whole BoNT/F (PubMed:19476346, PubMed:19650874). Interferes with uptake of BoNT/E and to a lesser extent BoNT/C (PubMed:19650874). in vitro binds gangliosides GT1b, GD1b and GD1a (PubMed:19476346, PubMed:19650874, PubMed:21849494). Binds to synaptic vesicle glycoproteins SV2A, SV2B and SV2C which may serve as coreceptors with gangliosides (PubMed:19476346, PubMed:19650874). Interaction with SV2 proteins requires SV2 glycosylation (PubMed:19476346). However knockout SV2A/SV2B mice still cleave synaptobrevin, leaving the identification of its receptor unclear (PubMed:21483489).</text>
</comment>
<comment type="catalytic activity">
    <reaction evidence="15">
        <text>Limited hydrolysis of proteins of the neuroexocytosis apparatus, synaptobrevins, SNAP25 or syntaxin. No detected action on small molecule substrates.</text>
        <dbReference type="EC" id="3.4.24.69"/>
    </reaction>
</comment>
<comment type="cofactor">
    <cofactor evidence="7">
        <name>Zn(2+)</name>
        <dbReference type="ChEBI" id="CHEBI:29105"/>
    </cofactor>
    <text evidence="7">Binds 1 zinc ion per subunit (PubMed:19543288).</text>
</comment>
<comment type="biophysicochemical properties">
    <kinetics>
        <KM evidence="12">19 uM for over-expressed human VAMP1</KM>
        <KM evidence="12">24.5 uM for over-expressed human VAMP2</KM>
        <KM evidence="12">15 uM for over-expressed human VAMP3</KM>
        <text evidence="12">kcat is 16.12, 34.37 and 28.57 sec(-1) for over-expressed human VAMP1, VAMP2 and VAMP3 respectively.</text>
    </kinetics>
</comment>
<comment type="subunit">
    <text evidence="6 8">Heterodimer; disulfide-linked heterodimer of a light chain (LC) and a heavy chain (HC). The LC has the proteolytic/pharmacological activity, while the N- and C-terminal of the HC mediate channel formation and toxin binding, respectively. Interacts with host synaptic vesicle glycoproteins SV2A, SV2B and SV2C (PubMed:19650874). HC interacts with a complex including at least host SV2 and synaptotagmin-1 (SYT1); copurification depends on glycosylation of SV2 (PubMed:19476346).</text>
</comment>
<comment type="interaction">
    <interactant intactId="EBI-7604673">
        <id>A7GBG3</id>
    </interactant>
    <interactant intactId="EBI-520113">
        <id>P63027</id>
        <label>VAMP2</label>
    </interactant>
    <organismsDiffer>true</organismsDiffer>
    <experiments>2</experiments>
</comment>
<comment type="subcellular location">
    <molecule>Botulinum neurotoxin type F</molecule>
    <subcellularLocation>
        <location evidence="1">Secreted</location>
    </subcellularLocation>
</comment>
<comment type="subcellular location">
    <molecule>Botulinum neurotoxin F light chain</molecule>
    <subcellularLocation>
        <location evidence="1">Secreted</location>
    </subcellularLocation>
    <subcellularLocation>
        <location evidence="15 16">Host cytoplasm</location>
        <location evidence="15 16">Host cytosol</location>
    </subcellularLocation>
</comment>
<comment type="subcellular location">
    <molecule>Botulinum neurotoxin F heavy chain</molecule>
    <subcellularLocation>
        <location evidence="1">Secreted</location>
    </subcellularLocation>
    <subcellularLocation>
        <location evidence="1">Host synapse</location>
        <location evidence="1">Host presynaptic cell membrane</location>
    </subcellularLocation>
    <subcellularLocation>
        <location evidence="15">Host cytoplasmic vesicle</location>
        <location evidence="15">Host secretory vesicle</location>
        <location evidence="15">Host synaptic vesicle membrane</location>
        <topology evidence="14">Multi-pass membrane protein</topology>
    </subcellularLocation>
</comment>
<comment type="domain">
    <molecule>Botulinum neurotoxin F light chain</molecule>
    <text evidence="7 15">Has protease activity (PubMed:19476346, PubMed:19543288).</text>
</comment>
<comment type="domain">
    <molecule>Botulinum neurotoxin F heavy chain</molecule>
    <text evidence="1 8 15">Has 3 functional domains; the translocation domain (TD) and the receptor-binding domain (RBD) which is further subdivided into N- and C-terminal domains (N-RBD and C-RBD) (PubMed:19476346). The N-terminus of the TD wraps an extended belt around the perimeter of the LC, protecting Zn(2+) in the active site and may be a pseudosubstrate inhibitor which serves as an intramolecular chaperone for the LC prior to its translocation into the host cytosol (By similarity). The RBD binds transiently exposed coreceptors on the host presynaptic cell membrane (PubMed:19476346, PubMed:19650874).</text>
</comment>
<comment type="miscellaneous">
    <text>There are seven antigenically distinct forms of botulinum neurotoxin: Types A, B, C, D, E, F, and G; new subtypes are quite frequent.</text>
</comment>
<comment type="miscellaneous">
    <text evidence="1">Botulism poisoning is usually food-borne, either by ingesting toxin or bacterial-contaminated food, or less frequently by inhalation poisoning. In both cases the neurotoxin binds to the apical surface of epithelial cells in the gut or airway. Toxin undergoes receptor-mediated endocytosis (using a different receptor than on target nerve cells), transcytosis across the epithelial cells and release into the general circulation. Once in the general circulation it binds to its target cells.</text>
</comment>
<comment type="miscellaneous">
    <text evidence="5 9">Strain Langeland / NCTC 10281 / Type F was isolated from home-made liver paste associated with human botulism in Denmark in 1958 (PubMed:14423425). It is type F1 (PubMed:20511432).</text>
</comment>
<comment type="similarity">
    <text evidence="14">Belongs to the peptidase M27 family.</text>
</comment>
<comment type="caution">
    <text evidence="6 8 10">It is not clear whether a synaptic vesicle protein acts as its receptor; there is evidence for and against SV2 fulfilling this function (PubMed:19476346, PubMed:19650874, PubMed:21483489).</text>
</comment>
<comment type="online information" name="BotDB - A Database Resource for Clostridial Neurotoxins">
    <link uri="https://botdb.abcc.ncifcrf.gov/"/>
</comment>
<sequence>MPVVINSFNYNDPVNDDTILYMQIPYEEKSKKYYKAFEIMRNVWIIPERNTIGTDPSDFDPPASLENGSSAYYDPNYLTTDAEKDRYLKTTIKLFKRINSNPAGEVLLQEISYAKPYLGNEHTPINEFHPVTRTTSVNIKSSTNVKSSIILNLLVLGAGPDIFENSSYPVRKLMDSGGVYDPSNDGFGSINIVTFSPEYEYTFNDISGGYNSSTESFIADPAISLAHELIHALHGLYGARGVTYKETIKVKQAPLMIAEKPIRLEEFLTFGGQDLNIITSAMKEKIYNNLLANYEKIATRLSRVNSAPPEYDINEYKDYFQWKYGLDKNADGSYTVNENKFNEIYKKLYSFTEIDLANKFKVKCRNTYFIKYGFLKVPNLLDDDIYTVSEGFNIGNLAVNNRGQNIKLNPKIIDSIPDKGLVEKIVKFCKSVIPRKGTKAPPRLCIRVNNRELFFVASESSYNENDINTPKEIDDTTNLNNNYRNNLDEVILDYNSETIPQISNQTLNTLVQDDSYVPRYDSNGTSEIEEHNVVDLNVFFYLHAQKVPEGETNISLTSSIDTALSEESQVYTFFSSEFINTINKPVHAALFISWINQVIRDFTTEATQKSTFDKIADISLVVPYVGLALNIGNEVQKENFKEAFELLGAGILLEFVPELLIPTILVFTIKSFIGSSENKNKIIKAINNSLMERETKWKEIYSWIVSNWLTRINTQFNKRKEQMYQALQNQVDAIKTVIEYKYNNYTSDERNRLESEYNINNIREELNKKVSLAMENIERFITESSIFYLMKLINEAKVSKLREYDEGVKEYLLDYISEHRSILGNSVQELNDLVTSTLNNSIPFELSSYTNDKILILYFNKLYKKIKDNSILDMRYENNKFIDISGYGSNISINGDVYIYSTNRNQFGIYSSKPSEVNIAQNNDIIYNGRYQNFSISFWVRIPKYFNKVNLNNEYTIIDCIRNNNSGWKISLNYNKIIWTLQDTAGNNQKLVFNYTQMISISDYINKWIFVTITNNRLGNSRIYINGNLIDEKSISNLGDIHVSDNILFKIVGCNDTRYVGIRYFKVFDTELGKTEIETLYSDEPDPSILKDFWGNYLLYNKRYYLLNLLRTDKSITQNSNFLNINQQRGVYQKPNIFSNTRLYTGVEVIIRKNGSTDISNTDNFVRKNDLAYINVVDRDVEYRLYADISIAKPEKIIKLIRTSNSNNSLGQIIVMDSIGNNCTMNFQNNNGGNIGLLGFHSNNLVASSWYYNNIRKNTSSNGCFWSFISKEHGWQEN</sequence>
<feature type="chain" id="PRO_0000444908" description="Botulinum neurotoxin type F">
    <location>
        <begin position="1"/>
        <end position="1278"/>
    </location>
</feature>
<feature type="chain" id="PRO_0000444909" description="Botulinum neurotoxin F light chain">
    <location>
        <begin position="1"/>
        <end position="436"/>
    </location>
</feature>
<feature type="chain" id="PRO_0000444910" description="Botulinum neurotoxin F heavy chain">
    <location>
        <begin position="437"/>
        <end position="1278"/>
    </location>
</feature>
<feature type="region of interest" description="Translocation domain (TD)" evidence="1">
    <location>
        <begin position="440"/>
        <end position="862"/>
    </location>
</feature>
<feature type="region of interest" description="Belt" evidence="1">
    <location>
        <begin position="485"/>
        <end position="534"/>
    </location>
</feature>
<feature type="region of interest" description="N-terminus of receptor binding domain (N-RBD)" evidence="15">
    <location>
        <begin position="864"/>
        <end position="1085"/>
    </location>
</feature>
<feature type="region of interest" description="C-terminus of receptor binding domain (C-RBD)" evidence="15">
    <location>
        <begin position="1086"/>
        <end position="1278"/>
    </location>
</feature>
<feature type="region of interest" description="Host ganglioside GD1a binding" evidence="11 23">
    <location>
        <begin position="1240"/>
        <end position="1241"/>
    </location>
</feature>
<feature type="region of interest" description="Host ganglioside GD1a binding" evidence="11 23">
    <location>
        <begin position="1248"/>
        <end position="1250"/>
    </location>
</feature>
<feature type="coiled-coil region" evidence="3">
    <location>
        <begin position="717"/>
        <end position="783"/>
    </location>
</feature>
<feature type="short sequence motif" description="Host ganglioside-binding motif" evidence="1 15 17">
    <location>
        <begin position="1245"/>
        <end position="1248"/>
    </location>
</feature>
<feature type="active site" evidence="4">
    <location>
        <position position="228"/>
    </location>
</feature>
<feature type="binding site" evidence="4 7 20 21">
    <location>
        <position position="227"/>
    </location>
    <ligand>
        <name>Zn(2+)</name>
        <dbReference type="ChEBI" id="CHEBI:29105"/>
        <note>catalytic</note>
    </ligand>
</feature>
<feature type="binding site" evidence="4 7 20 21">
    <location>
        <position position="231"/>
    </location>
    <ligand>
        <name>Zn(2+)</name>
        <dbReference type="ChEBI" id="CHEBI:29105"/>
        <note>catalytic</note>
    </ligand>
</feature>
<feature type="binding site" evidence="7 20 21">
    <location>
        <position position="266"/>
    </location>
    <ligand>
        <name>Zn(2+)</name>
        <dbReference type="ChEBI" id="CHEBI:29105"/>
        <note>catalytic</note>
    </ligand>
</feature>
<feature type="binding site" evidence="11">
    <location>
        <position position="1111"/>
    </location>
    <ligand>
        <name>a ganglioside GD1a (d18:1(4E))</name>
        <dbReference type="ChEBI" id="CHEBI:78445"/>
        <note>host ganglioside</note>
    </ligand>
</feature>
<feature type="binding site" evidence="11 23">
    <location>
        <position position="1195"/>
    </location>
    <ligand>
        <name>a ganglioside GD1a (d18:1(4E))</name>
        <dbReference type="ChEBI" id="CHEBI:78445"/>
        <note>host ganglioside</note>
    </ligand>
</feature>
<feature type="binding site" evidence="11 23">
    <location>
        <position position="1256"/>
    </location>
    <ligand>
        <name>a ganglioside GD1a (d18:1(4E))</name>
        <dbReference type="ChEBI" id="CHEBI:78445"/>
        <note>host ganglioside</note>
    </ligand>
</feature>
<feature type="disulfide bond" description="Interchain (between light and heavy chains)" evidence="1 14">
    <location>
        <begin position="429"/>
        <end position="445"/>
    </location>
</feature>
<feature type="mutagenesis site" description="Dramatically decreased cleavage of host synaptobrevin-2 (VAMP2)." evidence="7">
    <original>R</original>
    <variation>A</variation>
    <location>
        <position position="133"/>
    </location>
</feature>
<feature type="mutagenesis site" description="Dramatically decreased cleavage of VAMP2." evidence="7">
    <original>R</original>
    <variation>K</variation>
    <location>
        <position position="133"/>
    </location>
</feature>
<feature type="mutagenesis site" description="Significantly decreased cleavage of VAMP2." evidence="7">
    <original>E</original>
    <variation>A</variation>
    <location>
        <position position="164"/>
    </location>
</feature>
<feature type="mutagenesis site" description="Dramatically decreased cleavage of VAMP2." evidence="7">
    <original>R</original>
    <variation>K</variation>
    <location>
        <position position="171"/>
    </location>
</feature>
<feature type="mutagenesis site" description="Slightly decreased cleavage of VAMP2." evidence="7">
    <original>Y</original>
    <variation>A</variation>
    <location>
        <position position="316"/>
    </location>
</feature>
<feature type="mutagenesis site" description="Decreased heavy chain (HC) binding to ganglioside GD1a. Dramatically decreased HC binding to GD1a; when associated with A-1256. Significantly decreased; when associated with K-1241 and A-1256, which partially restores binding." evidence="11">
    <original>R</original>
    <variation>A</variation>
    <location>
        <position position="1111"/>
    </location>
</feature>
<feature type="mutagenesis site" description="Significantly decreased binding of heavy chain to synaptosomes, significantly decreased binding to ganglioside GT1b." evidence="6 8">
    <original>E</original>
    <variation>A</variation>
    <location>
        <position position="1195"/>
    </location>
</feature>
<feature type="mutagenesis site" description="Dramatically decreased heavy chain (HC) binding to ganglioside GD1a. Significantly decreased HC binding to GD1a; when associated with A-1111 and A-1256, partially restores binding." evidence="11">
    <original>H</original>
    <variation>K</variation>
    <location>
        <position position="1241"/>
    </location>
</feature>
<feature type="mutagenesis site" description="Significantly decreased heavy chain binding to ganglioside GT1b." evidence="6">
    <original>S</original>
    <variation>A</variation>
    <location>
        <position position="1248"/>
    </location>
</feature>
<feature type="mutagenesis site" description="Significantly decreased binding of heavy chain (HC) to synaptosomes, significantly decreased binding to ganglioside GT1b. HC no longer inhibits BoNT/F whole-toxin uptake and toxicity. Loss of HC binding to synaptic vesicles, greatly decreased binding to neurons." evidence="6 8">
    <original>W</original>
    <variation>L</variation>
    <location>
        <position position="1250"/>
    </location>
</feature>
<feature type="mutagenesis site" description="Decreased heavy chain binding to ganglioside GT1b." evidence="6">
    <original>Y</original>
    <variation>F</variation>
    <location>
        <position position="1251"/>
    </location>
</feature>
<feature type="mutagenesis site" description="Wild-type heavy chain binding to ganglioside GT1b." evidence="6">
    <original>N</original>
    <variation>A</variation>
    <location>
        <position position="1254"/>
    </location>
</feature>
<feature type="mutagenesis site" description="Decreased heavy chain (HC) binding to ganglioside GD1a. Dramatically decreased HC binding to GD1a; when associated with A-1111. Significantly decreased; when associated with A-1111 and K-1241, which partially restores binding." evidence="11">
    <original>R</original>
    <variation>A</variation>
    <location>
        <position position="1256"/>
    </location>
</feature>
<feature type="strand" evidence="24">
    <location>
        <begin position="16"/>
        <end position="22"/>
    </location>
</feature>
<feature type="helix" evidence="25">
    <location>
        <begin position="28"/>
        <end position="30"/>
    </location>
</feature>
<feature type="strand" evidence="24">
    <location>
        <begin position="34"/>
        <end position="40"/>
    </location>
</feature>
<feature type="strand" evidence="24">
    <location>
        <begin position="43"/>
        <end position="49"/>
    </location>
</feature>
<feature type="helix" evidence="24">
    <location>
        <begin position="56"/>
        <end position="59"/>
    </location>
</feature>
<feature type="turn" evidence="25">
    <location>
        <begin position="67"/>
        <end position="69"/>
    </location>
</feature>
<feature type="turn" evidence="24">
    <location>
        <begin position="75"/>
        <end position="78"/>
    </location>
</feature>
<feature type="helix" evidence="24">
    <location>
        <begin position="81"/>
        <end position="99"/>
    </location>
</feature>
<feature type="helix" evidence="24">
    <location>
        <begin position="102"/>
        <end position="113"/>
    </location>
</feature>
<feature type="turn" evidence="24">
    <location>
        <begin position="133"/>
        <end position="135"/>
    </location>
</feature>
<feature type="strand" evidence="24">
    <location>
        <begin position="136"/>
        <end position="140"/>
    </location>
</feature>
<feature type="strand" evidence="24">
    <location>
        <begin position="146"/>
        <end position="150"/>
    </location>
</feature>
<feature type="strand" evidence="24">
    <location>
        <begin position="152"/>
        <end position="157"/>
    </location>
</feature>
<feature type="strand" evidence="24">
    <location>
        <begin position="166"/>
        <end position="169"/>
    </location>
</feature>
<feature type="helix" evidence="24">
    <location>
        <begin position="182"/>
        <end position="184"/>
    </location>
</feature>
<feature type="strand" evidence="24">
    <location>
        <begin position="191"/>
        <end position="194"/>
    </location>
</feature>
<feature type="strand" evidence="24">
    <location>
        <begin position="199"/>
        <end position="204"/>
    </location>
</feature>
<feature type="strand" evidence="24">
    <location>
        <begin position="216"/>
        <end position="218"/>
    </location>
</feature>
<feature type="helix" evidence="24">
    <location>
        <begin position="221"/>
        <end position="236"/>
    </location>
</feature>
<feature type="helix" evidence="24">
    <location>
        <begin position="241"/>
        <end position="245"/>
    </location>
</feature>
<feature type="strand" evidence="24">
    <location>
        <begin position="247"/>
        <end position="251"/>
    </location>
</feature>
<feature type="turn" evidence="24">
    <location>
        <begin position="253"/>
        <end position="255"/>
    </location>
</feature>
<feature type="strand" evidence="24">
    <location>
        <begin position="258"/>
        <end position="263"/>
    </location>
</feature>
<feature type="helix" evidence="24">
    <location>
        <begin position="264"/>
        <end position="270"/>
    </location>
</feature>
<feature type="helix" evidence="24">
    <location>
        <begin position="272"/>
        <end position="277"/>
    </location>
</feature>
<feature type="helix" evidence="24">
    <location>
        <begin position="280"/>
        <end position="302"/>
    </location>
</feature>
<feature type="helix" evidence="24">
    <location>
        <begin position="313"/>
        <end position="323"/>
    </location>
</feature>
<feature type="strand" evidence="24">
    <location>
        <begin position="326"/>
        <end position="328"/>
    </location>
</feature>
<feature type="strand" evidence="24">
    <location>
        <begin position="334"/>
        <end position="336"/>
    </location>
</feature>
<feature type="helix" evidence="24">
    <location>
        <begin position="338"/>
        <end position="349"/>
    </location>
</feature>
<feature type="helix" evidence="24">
    <location>
        <begin position="353"/>
        <end position="359"/>
    </location>
</feature>
<feature type="strand" evidence="24">
    <location>
        <begin position="366"/>
        <end position="368"/>
    </location>
</feature>
<feature type="strand" evidence="24">
    <location>
        <begin position="374"/>
        <end position="376"/>
    </location>
</feature>
<feature type="turn" evidence="24">
    <location>
        <begin position="383"/>
        <end position="385"/>
    </location>
</feature>
<feature type="turn" evidence="24">
    <location>
        <begin position="388"/>
        <end position="390"/>
    </location>
</feature>
<feature type="helix" evidence="24">
    <location>
        <begin position="395"/>
        <end position="404"/>
    </location>
</feature>
<feature type="turn" evidence="24">
    <location>
        <begin position="406"/>
        <end position="408"/>
    </location>
</feature>
<feature type="helix" evidence="24">
    <location>
        <begin position="410"/>
        <end position="415"/>
    </location>
</feature>
<feature type="helix" evidence="26">
    <location>
        <begin position="867"/>
        <end position="869"/>
    </location>
</feature>
<feature type="strand" evidence="26">
    <location>
        <begin position="870"/>
        <end position="876"/>
    </location>
</feature>
<feature type="strand" evidence="26">
    <location>
        <begin position="878"/>
        <end position="883"/>
    </location>
</feature>
<feature type="strand" evidence="26">
    <location>
        <begin position="885"/>
        <end position="887"/>
    </location>
</feature>
<feature type="strand" evidence="26">
    <location>
        <begin position="890"/>
        <end position="895"/>
    </location>
</feature>
<feature type="strand" evidence="26">
    <location>
        <begin position="906"/>
        <end position="920"/>
    </location>
</feature>
<feature type="turn" evidence="26">
    <location>
        <begin position="923"/>
        <end position="925"/>
    </location>
</feature>
<feature type="strand" evidence="26">
    <location>
        <begin position="934"/>
        <end position="941"/>
    </location>
</feature>
<feature type="helix" evidence="26">
    <location>
        <begin position="948"/>
        <end position="950"/>
    </location>
</feature>
<feature type="strand" evidence="26">
    <location>
        <begin position="955"/>
        <end position="962"/>
    </location>
</feature>
<feature type="turn" evidence="26">
    <location>
        <begin position="963"/>
        <end position="965"/>
    </location>
</feature>
<feature type="strand" evidence="26">
    <location>
        <begin position="966"/>
        <end position="973"/>
    </location>
</feature>
<feature type="strand" evidence="26">
    <location>
        <begin position="976"/>
        <end position="982"/>
    </location>
</feature>
<feature type="strand" evidence="26">
    <location>
        <begin position="988"/>
        <end position="994"/>
    </location>
</feature>
<feature type="strand" evidence="26">
    <location>
        <begin position="997"/>
        <end position="1001"/>
    </location>
</feature>
<feature type="strand" evidence="26">
    <location>
        <begin position="1007"/>
        <end position="1015"/>
    </location>
</feature>
<feature type="strand" evidence="26">
    <location>
        <begin position="1019"/>
        <end position="1025"/>
    </location>
</feature>
<feature type="strand" evidence="26">
    <location>
        <begin position="1028"/>
        <end position="1034"/>
    </location>
</feature>
<feature type="strand" evidence="26">
    <location>
        <begin position="1045"/>
        <end position="1053"/>
    </location>
</feature>
<feature type="strand" evidence="26">
    <location>
        <begin position="1059"/>
        <end position="1070"/>
    </location>
</feature>
<feature type="helix" evidence="26">
    <location>
        <begin position="1074"/>
        <end position="1083"/>
    </location>
</feature>
<feature type="strand" evidence="26">
    <location>
        <begin position="1095"/>
        <end position="1097"/>
    </location>
</feature>
<feature type="strand" evidence="26">
    <location>
        <begin position="1099"/>
        <end position="1101"/>
    </location>
</feature>
<feature type="strand" evidence="26">
    <location>
        <begin position="1103"/>
        <end position="1111"/>
    </location>
</feature>
<feature type="strand" evidence="26">
    <location>
        <begin position="1114"/>
        <end position="1118"/>
    </location>
</feature>
<feature type="strand" evidence="26">
    <location>
        <begin position="1120"/>
        <end position="1128"/>
    </location>
</feature>
<feature type="strand" evidence="26">
    <location>
        <begin position="1131"/>
        <end position="1134"/>
    </location>
</feature>
<feature type="turn" evidence="26">
    <location>
        <begin position="1135"/>
        <end position="1137"/>
    </location>
</feature>
<feature type="strand" evidence="26">
    <location>
        <begin position="1138"/>
        <end position="1141"/>
    </location>
</feature>
<feature type="strand" evidence="26">
    <location>
        <begin position="1148"/>
        <end position="1153"/>
    </location>
</feature>
<feature type="strand" evidence="26">
    <location>
        <begin position="1171"/>
        <end position="1178"/>
    </location>
</feature>
<feature type="strand" evidence="26">
    <location>
        <begin position="1181"/>
        <end position="1187"/>
    </location>
</feature>
<feature type="strand" evidence="26">
    <location>
        <begin position="1193"/>
        <end position="1202"/>
    </location>
</feature>
<feature type="strand" evidence="26">
    <location>
        <begin position="1212"/>
        <end position="1219"/>
    </location>
</feature>
<feature type="strand" evidence="26">
    <location>
        <begin position="1222"/>
        <end position="1229"/>
    </location>
</feature>
<feature type="strand" evidence="26">
    <location>
        <begin position="1234"/>
        <end position="1248"/>
    </location>
</feature>
<feature type="helix" evidence="26">
    <location>
        <begin position="1249"/>
        <end position="1253"/>
    </location>
</feature>
<feature type="strand" evidence="26">
    <location>
        <begin position="1266"/>
        <end position="1269"/>
    </location>
</feature>
<accession>A7GBG3</accession>
<accession>Q79AH9</accession>
<name>BXF_CLOBL</name>
<keyword id="KW-0002">3D-structure</keyword>
<keyword id="KW-0175">Coiled coil</keyword>
<keyword id="KW-1015">Disulfide bond</keyword>
<keyword id="KW-1032">Host cell membrane</keyword>
<keyword id="KW-1035">Host cytoplasm</keyword>
<keyword id="KW-1036">Host cytoplasmic vesicle</keyword>
<keyword id="KW-1043">Host membrane</keyword>
<keyword id="KW-1051">Host synapse</keyword>
<keyword id="KW-0378">Hydrolase</keyword>
<keyword id="KW-0446">Lipid-binding</keyword>
<keyword id="KW-0472">Membrane</keyword>
<keyword id="KW-0479">Metal-binding</keyword>
<keyword id="KW-0482">Metalloprotease</keyword>
<keyword id="KW-0528">Neurotoxin</keyword>
<keyword id="KW-0645">Protease</keyword>
<keyword id="KW-0964">Secreted</keyword>
<keyword id="KW-0800">Toxin</keyword>
<keyword id="KW-0843">Virulence</keyword>
<keyword id="KW-0862">Zinc</keyword>
<evidence type="ECO:0000250" key="1">
    <source>
        <dbReference type="UniProtKB" id="P0DPI0"/>
    </source>
</evidence>
<evidence type="ECO:0000250" key="2">
    <source>
        <dbReference type="UniProtKB" id="P30996"/>
    </source>
</evidence>
<evidence type="ECO:0000255" key="3"/>
<evidence type="ECO:0000255" key="4">
    <source>
        <dbReference type="PROSITE-ProRule" id="PRU10095"/>
    </source>
</evidence>
<evidence type="ECO:0000269" key="5">
    <source>
    </source>
</evidence>
<evidence type="ECO:0000269" key="6">
    <source>
    </source>
</evidence>
<evidence type="ECO:0000269" key="7">
    <source>
    </source>
</evidence>
<evidence type="ECO:0000269" key="8">
    <source>
    </source>
</evidence>
<evidence type="ECO:0000269" key="9">
    <source>
    </source>
</evidence>
<evidence type="ECO:0000269" key="10">
    <source>
    </source>
</evidence>
<evidence type="ECO:0000269" key="11">
    <source>
    </source>
</evidence>
<evidence type="ECO:0000269" key="12">
    <source>
    </source>
</evidence>
<evidence type="ECO:0000303" key="13">
    <source ref="1"/>
</evidence>
<evidence type="ECO:0000305" key="14"/>
<evidence type="ECO:0000305" key="15">
    <source>
    </source>
</evidence>
<evidence type="ECO:0000305" key="16">
    <source>
    </source>
</evidence>
<evidence type="ECO:0000305" key="17">
    <source>
    </source>
</evidence>
<evidence type="ECO:0000312" key="18">
    <source>
        <dbReference type="EMBL" id="ABS41202.1"/>
    </source>
</evidence>
<evidence type="ECO:0000312" key="19">
    <source>
        <dbReference type="EMBL" id="CAA57358.1"/>
    </source>
</evidence>
<evidence type="ECO:0007744" key="20">
    <source>
        <dbReference type="PDB" id="3FIE"/>
    </source>
</evidence>
<evidence type="ECO:0007744" key="21">
    <source>
        <dbReference type="PDB" id="3FII"/>
    </source>
</evidence>
<evidence type="ECO:0007744" key="22">
    <source>
        <dbReference type="PDB" id="3FUQ"/>
    </source>
</evidence>
<evidence type="ECO:0007744" key="23">
    <source>
        <dbReference type="PDB" id="3RSJ"/>
    </source>
</evidence>
<evidence type="ECO:0007829" key="24">
    <source>
        <dbReference type="PDB" id="3FIE"/>
    </source>
</evidence>
<evidence type="ECO:0007829" key="25">
    <source>
        <dbReference type="PDB" id="3FII"/>
    </source>
</evidence>
<evidence type="ECO:0007829" key="26">
    <source>
        <dbReference type="PDB" id="3RSJ"/>
    </source>
</evidence>